<evidence type="ECO:0000255" key="1">
    <source>
        <dbReference type="HAMAP-Rule" id="MF_00170"/>
    </source>
</evidence>
<accession>B5ENJ5</accession>
<protein>
    <recommendedName>
        <fullName evidence="1">Ribose-5-phosphate isomerase A</fullName>
        <ecNumber evidence="1">5.3.1.6</ecNumber>
    </recommendedName>
    <alternativeName>
        <fullName evidence="1">Phosphoriboisomerase A</fullName>
        <shortName evidence="1">PRI</shortName>
    </alternativeName>
</protein>
<feature type="chain" id="PRO_1000194685" description="Ribose-5-phosphate isomerase A">
    <location>
        <begin position="1"/>
        <end position="219"/>
    </location>
</feature>
<feature type="active site" description="Proton acceptor" evidence="1">
    <location>
        <position position="103"/>
    </location>
</feature>
<feature type="binding site" evidence="1">
    <location>
        <begin position="28"/>
        <end position="31"/>
    </location>
    <ligand>
        <name>substrate</name>
    </ligand>
</feature>
<feature type="binding site" evidence="1">
    <location>
        <begin position="81"/>
        <end position="84"/>
    </location>
    <ligand>
        <name>substrate</name>
    </ligand>
</feature>
<feature type="binding site" evidence="1">
    <location>
        <begin position="94"/>
        <end position="97"/>
    </location>
    <ligand>
        <name>substrate</name>
    </ligand>
</feature>
<feature type="binding site" evidence="1">
    <location>
        <position position="121"/>
    </location>
    <ligand>
        <name>substrate</name>
    </ligand>
</feature>
<gene>
    <name evidence="1" type="primary">rpiA</name>
    <name type="ordered locus">Lferr_0779</name>
</gene>
<name>RPIA_ACIF5</name>
<comment type="function">
    <text evidence="1">Catalyzes the reversible conversion of ribose-5-phosphate to ribulose 5-phosphate.</text>
</comment>
<comment type="catalytic activity">
    <reaction evidence="1">
        <text>aldehydo-D-ribose 5-phosphate = D-ribulose 5-phosphate</text>
        <dbReference type="Rhea" id="RHEA:14657"/>
        <dbReference type="ChEBI" id="CHEBI:58121"/>
        <dbReference type="ChEBI" id="CHEBI:58273"/>
        <dbReference type="EC" id="5.3.1.6"/>
    </reaction>
</comment>
<comment type="pathway">
    <text evidence="1">Carbohydrate degradation; pentose phosphate pathway; D-ribose 5-phosphate from D-ribulose 5-phosphate (non-oxidative stage): step 1/1.</text>
</comment>
<comment type="subunit">
    <text evidence="1">Homodimer.</text>
</comment>
<comment type="similarity">
    <text evidence="1">Belongs to the ribose 5-phosphate isomerase family.</text>
</comment>
<keyword id="KW-0413">Isomerase</keyword>
<proteinExistence type="inferred from homology"/>
<reference key="1">
    <citation type="submission" date="2008-08" db="EMBL/GenBank/DDBJ databases">
        <title>Complete sequence of Acidithiobacillus ferrooxidans ATCC 53993.</title>
        <authorList>
            <person name="Lucas S."/>
            <person name="Copeland A."/>
            <person name="Lapidus A."/>
            <person name="Glavina del Rio T."/>
            <person name="Dalin E."/>
            <person name="Tice H."/>
            <person name="Bruce D."/>
            <person name="Goodwin L."/>
            <person name="Pitluck S."/>
            <person name="Sims D."/>
            <person name="Brettin T."/>
            <person name="Detter J.C."/>
            <person name="Han C."/>
            <person name="Kuske C.R."/>
            <person name="Larimer F."/>
            <person name="Land M."/>
            <person name="Hauser L."/>
            <person name="Kyrpides N."/>
            <person name="Lykidis A."/>
            <person name="Borole A.P."/>
        </authorList>
    </citation>
    <scope>NUCLEOTIDE SEQUENCE [LARGE SCALE GENOMIC DNA]</scope>
    <source>
        <strain>ATCC 53993 / BNL-5-31</strain>
    </source>
</reference>
<sequence length="219" mass="23153">MNTDALKKMAAEAALRYIQPGMVVGVGTGSTTNFFIEALGAAKIHVDGYVASSIATENRLKAQGLNVLELNATGDIPVYIDGADEADPHFRLIKGGGGALTREKIVASAARLFVCIADDSKDRPMLGKFPLPVEVIPFARSFVARQLVKIGGSPTLRSGITTDNGNVILDVTGLDFSDPLRMEETINAIPGVLDNGIFAHRRADVMLFGSAGGVIERKA</sequence>
<organism>
    <name type="scientific">Acidithiobacillus ferrooxidans (strain ATCC 53993 / BNL-5-31)</name>
    <name type="common">Leptospirillum ferrooxidans (ATCC 53993)</name>
    <dbReference type="NCBI Taxonomy" id="380394"/>
    <lineage>
        <taxon>Bacteria</taxon>
        <taxon>Pseudomonadati</taxon>
        <taxon>Pseudomonadota</taxon>
        <taxon>Acidithiobacillia</taxon>
        <taxon>Acidithiobacillales</taxon>
        <taxon>Acidithiobacillaceae</taxon>
        <taxon>Acidithiobacillus</taxon>
    </lineage>
</organism>
<dbReference type="EC" id="5.3.1.6" evidence="1"/>
<dbReference type="EMBL" id="CP001132">
    <property type="protein sequence ID" value="ACH83029.1"/>
    <property type="molecule type" value="Genomic_DNA"/>
</dbReference>
<dbReference type="RefSeq" id="WP_009560936.1">
    <property type="nucleotide sequence ID" value="NC_011206.1"/>
</dbReference>
<dbReference type="SMR" id="B5ENJ5"/>
<dbReference type="GeneID" id="65279980"/>
<dbReference type="KEGG" id="afe:Lferr_0779"/>
<dbReference type="eggNOG" id="COG0120">
    <property type="taxonomic scope" value="Bacteria"/>
</dbReference>
<dbReference type="HOGENOM" id="CLU_056590_1_1_6"/>
<dbReference type="UniPathway" id="UPA00115">
    <property type="reaction ID" value="UER00412"/>
</dbReference>
<dbReference type="GO" id="GO:0005829">
    <property type="term" value="C:cytosol"/>
    <property type="evidence" value="ECO:0007669"/>
    <property type="project" value="TreeGrafter"/>
</dbReference>
<dbReference type="GO" id="GO:0004751">
    <property type="term" value="F:ribose-5-phosphate isomerase activity"/>
    <property type="evidence" value="ECO:0007669"/>
    <property type="project" value="UniProtKB-UniRule"/>
</dbReference>
<dbReference type="GO" id="GO:0006014">
    <property type="term" value="P:D-ribose metabolic process"/>
    <property type="evidence" value="ECO:0007669"/>
    <property type="project" value="TreeGrafter"/>
</dbReference>
<dbReference type="GO" id="GO:0009052">
    <property type="term" value="P:pentose-phosphate shunt, non-oxidative branch"/>
    <property type="evidence" value="ECO:0007669"/>
    <property type="project" value="UniProtKB-UniRule"/>
</dbReference>
<dbReference type="CDD" id="cd01398">
    <property type="entry name" value="RPI_A"/>
    <property type="match status" value="1"/>
</dbReference>
<dbReference type="FunFam" id="3.30.70.260:FF:000004">
    <property type="entry name" value="Ribose-5-phosphate isomerase A"/>
    <property type="match status" value="1"/>
</dbReference>
<dbReference type="FunFam" id="3.40.50.1360:FF:000001">
    <property type="entry name" value="Ribose-5-phosphate isomerase A"/>
    <property type="match status" value="1"/>
</dbReference>
<dbReference type="Gene3D" id="3.30.70.260">
    <property type="match status" value="1"/>
</dbReference>
<dbReference type="Gene3D" id="3.40.50.1360">
    <property type="match status" value="1"/>
</dbReference>
<dbReference type="HAMAP" id="MF_00170">
    <property type="entry name" value="Rib_5P_isom_A"/>
    <property type="match status" value="1"/>
</dbReference>
<dbReference type="InterPro" id="IPR037171">
    <property type="entry name" value="NagB/RpiA_transferase-like"/>
</dbReference>
<dbReference type="InterPro" id="IPR020672">
    <property type="entry name" value="Ribose5P_isomerase_typA_subgr"/>
</dbReference>
<dbReference type="InterPro" id="IPR004788">
    <property type="entry name" value="Ribose5P_isomerase_type_A"/>
</dbReference>
<dbReference type="NCBIfam" id="NF001924">
    <property type="entry name" value="PRK00702.1"/>
    <property type="match status" value="1"/>
</dbReference>
<dbReference type="NCBIfam" id="TIGR00021">
    <property type="entry name" value="rpiA"/>
    <property type="match status" value="1"/>
</dbReference>
<dbReference type="PANTHER" id="PTHR11934">
    <property type="entry name" value="RIBOSE-5-PHOSPHATE ISOMERASE"/>
    <property type="match status" value="1"/>
</dbReference>
<dbReference type="PANTHER" id="PTHR11934:SF0">
    <property type="entry name" value="RIBOSE-5-PHOSPHATE ISOMERASE"/>
    <property type="match status" value="1"/>
</dbReference>
<dbReference type="Pfam" id="PF06026">
    <property type="entry name" value="Rib_5-P_isom_A"/>
    <property type="match status" value="1"/>
</dbReference>
<dbReference type="SUPFAM" id="SSF75445">
    <property type="entry name" value="D-ribose-5-phosphate isomerase (RpiA), lid domain"/>
    <property type="match status" value="1"/>
</dbReference>
<dbReference type="SUPFAM" id="SSF100950">
    <property type="entry name" value="NagB/RpiA/CoA transferase-like"/>
    <property type="match status" value="1"/>
</dbReference>